<geneLocation type="chloroplast"/>
<protein>
    <recommendedName>
        <fullName evidence="1">Potassium/proton antiporter CemA</fullName>
    </recommendedName>
    <alternativeName>
        <fullName evidence="1">Chloroplast envelope membrane protein A</fullName>
        <shortName evidence="1">CemA</shortName>
    </alternativeName>
</protein>
<gene>
    <name evidence="1" type="primary">cemA</name>
</gene>
<sequence length="229" mass="26938">MAKKKAFTPLLYLASIVFLPWWISLSFNKSLKSWITNWWDTRQSETFLNDIQEKSILEQFIEVEELFLLDEMIKEYPETHLQKLRIGIQKETIQLIKLHNEDHIHTILHFSTNLICFVILSGYSILGNEELLILNSWAQEFLYNLSDTIKAFSILLLTDLCIGFHSPHGWELMIGSIYKDFGFTHNDQIISGLVSTFPVILDTIFKYWIFRYLNRVSPSLVVIYHSMND</sequence>
<name>CEMA_GOSBA</name>
<feature type="chain" id="PRO_0000275238" description="Potassium/proton antiporter CemA">
    <location>
        <begin position="1"/>
        <end position="229"/>
    </location>
</feature>
<feature type="transmembrane region" description="Helical" evidence="1">
    <location>
        <begin position="7"/>
        <end position="27"/>
    </location>
</feature>
<feature type="transmembrane region" description="Helical" evidence="1">
    <location>
        <begin position="114"/>
        <end position="134"/>
    </location>
</feature>
<feature type="transmembrane region" description="Helical" evidence="1">
    <location>
        <begin position="154"/>
        <end position="174"/>
    </location>
</feature>
<feature type="transmembrane region" description="Helical" evidence="1">
    <location>
        <begin position="189"/>
        <end position="209"/>
    </location>
</feature>
<comment type="function">
    <text evidence="1">Contributes to K(+)/H(+) antiport activity by supporting proton efflux to control proton extrusion and homeostasis in chloroplasts in a light-dependent manner to modulate photosynthesis. Prevents excessive induction of non-photochemical quenching (NPQ) under continuous-light conditions. Indirectly promotes efficient inorganic carbon uptake into chloroplasts.</text>
</comment>
<comment type="catalytic activity">
    <reaction evidence="1">
        <text>K(+)(in) + H(+)(out) = K(+)(out) + H(+)(in)</text>
        <dbReference type="Rhea" id="RHEA:29467"/>
        <dbReference type="ChEBI" id="CHEBI:15378"/>
        <dbReference type="ChEBI" id="CHEBI:29103"/>
    </reaction>
</comment>
<comment type="subcellular location">
    <subcellularLocation>
        <location evidence="1">Plastid</location>
        <location evidence="1">Chloroplast inner membrane</location>
        <topology evidence="1">Multi-pass membrane protein</topology>
    </subcellularLocation>
</comment>
<comment type="similarity">
    <text evidence="1 2">Belongs to the CemA family.</text>
</comment>
<keyword id="KW-0050">Antiport</keyword>
<keyword id="KW-0150">Chloroplast</keyword>
<keyword id="KW-0375">Hydrogen ion transport</keyword>
<keyword id="KW-0406">Ion transport</keyword>
<keyword id="KW-0472">Membrane</keyword>
<keyword id="KW-0934">Plastid</keyword>
<keyword id="KW-1001">Plastid inner membrane</keyword>
<keyword id="KW-0630">Potassium</keyword>
<keyword id="KW-0633">Potassium transport</keyword>
<keyword id="KW-0812">Transmembrane</keyword>
<keyword id="KW-1133">Transmembrane helix</keyword>
<keyword id="KW-0813">Transport</keyword>
<proteinExistence type="inferred from homology"/>
<organism>
    <name type="scientific">Gossypium barbadense</name>
    <name type="common">Sea Island cotton</name>
    <name type="synonym">Hibiscus barbadensis</name>
    <dbReference type="NCBI Taxonomy" id="3634"/>
    <lineage>
        <taxon>Eukaryota</taxon>
        <taxon>Viridiplantae</taxon>
        <taxon>Streptophyta</taxon>
        <taxon>Embryophyta</taxon>
        <taxon>Tracheophyta</taxon>
        <taxon>Spermatophyta</taxon>
        <taxon>Magnoliopsida</taxon>
        <taxon>eudicotyledons</taxon>
        <taxon>Gunneridae</taxon>
        <taxon>Pentapetalae</taxon>
        <taxon>rosids</taxon>
        <taxon>malvids</taxon>
        <taxon>Malvales</taxon>
        <taxon>Malvaceae</taxon>
        <taxon>Malvoideae</taxon>
        <taxon>Gossypium</taxon>
    </lineage>
</organism>
<accession>A0ZZ47</accession>
<dbReference type="EMBL" id="AP009123">
    <property type="protein sequence ID" value="BAF41259.1"/>
    <property type="molecule type" value="Genomic_DNA"/>
</dbReference>
<dbReference type="RefSeq" id="YP_913199.1">
    <property type="nucleotide sequence ID" value="NC_008641.1"/>
</dbReference>
<dbReference type="GeneID" id="4575305"/>
<dbReference type="GO" id="GO:0009706">
    <property type="term" value="C:chloroplast inner membrane"/>
    <property type="evidence" value="ECO:0007669"/>
    <property type="project" value="UniProtKB-SubCell"/>
</dbReference>
<dbReference type="GO" id="GO:0015297">
    <property type="term" value="F:antiporter activity"/>
    <property type="evidence" value="ECO:0007669"/>
    <property type="project" value="UniProtKB-KW"/>
</dbReference>
<dbReference type="GO" id="GO:0015078">
    <property type="term" value="F:proton transmembrane transporter activity"/>
    <property type="evidence" value="ECO:0007669"/>
    <property type="project" value="UniProtKB-UniRule"/>
</dbReference>
<dbReference type="GO" id="GO:0006813">
    <property type="term" value="P:potassium ion transport"/>
    <property type="evidence" value="ECO:0007669"/>
    <property type="project" value="UniProtKB-UniRule"/>
</dbReference>
<dbReference type="HAMAP" id="MF_01308">
    <property type="entry name" value="CemA_PxcA"/>
    <property type="match status" value="1"/>
</dbReference>
<dbReference type="InterPro" id="IPR004282">
    <property type="entry name" value="CemA"/>
</dbReference>
<dbReference type="PANTHER" id="PTHR33650:SF2">
    <property type="entry name" value="CHLOROPLAST ENVELOPE MEMBRANE PROTEIN"/>
    <property type="match status" value="1"/>
</dbReference>
<dbReference type="PANTHER" id="PTHR33650">
    <property type="entry name" value="CHLOROPLAST ENVELOPE MEMBRANE PROTEIN-RELATED"/>
    <property type="match status" value="1"/>
</dbReference>
<dbReference type="Pfam" id="PF03040">
    <property type="entry name" value="CemA"/>
    <property type="match status" value="1"/>
</dbReference>
<evidence type="ECO:0000255" key="1">
    <source>
        <dbReference type="HAMAP-Rule" id="MF_01308"/>
    </source>
</evidence>
<evidence type="ECO:0000305" key="2"/>
<reference key="1">
    <citation type="journal article" date="2006" name="Genes Genet. Syst.">
        <title>Complete nucleotide sequence of the cotton (Gossypium barbadense L.) chloroplast genome with a comparative analysis of sequences among 9 dicot plants.</title>
        <authorList>
            <person name="Ibrahim R.I.H."/>
            <person name="Azuma J."/>
            <person name="Sakamoto M."/>
        </authorList>
    </citation>
    <scope>NUCLEOTIDE SEQUENCE [LARGE SCALE GENOMIC DNA]</scope>
</reference>